<accession>Q6F0F5</accession>
<organism>
    <name type="scientific">Mesoplasma florum (strain ATCC 33453 / NBRC 100688 / NCTC 11704 / L1)</name>
    <name type="common">Acholeplasma florum</name>
    <dbReference type="NCBI Taxonomy" id="265311"/>
    <lineage>
        <taxon>Bacteria</taxon>
        <taxon>Bacillati</taxon>
        <taxon>Mycoplasmatota</taxon>
        <taxon>Mollicutes</taxon>
        <taxon>Entomoplasmatales</taxon>
        <taxon>Entomoplasmataceae</taxon>
        <taxon>Mesoplasma</taxon>
    </lineage>
</organism>
<dbReference type="EC" id="2.1.1.-" evidence="1"/>
<dbReference type="EMBL" id="AE017263">
    <property type="protein sequence ID" value="AAT76018.1"/>
    <property type="molecule type" value="Genomic_DNA"/>
</dbReference>
<dbReference type="RefSeq" id="YP_053902.1">
    <property type="nucleotide sequence ID" value="NC_006055.1"/>
</dbReference>
<dbReference type="SMR" id="Q6F0F5"/>
<dbReference type="STRING" id="265311.Mfl662"/>
<dbReference type="PaxDb" id="265311-Mfl662"/>
<dbReference type="EnsemblBacteria" id="AAT76018">
    <property type="protein sequence ID" value="AAT76018"/>
    <property type="gene ID" value="Mfl662"/>
</dbReference>
<dbReference type="KEGG" id="mfl:Mfl662"/>
<dbReference type="PATRIC" id="fig|265311.5.peg.664"/>
<dbReference type="eggNOG" id="COG0357">
    <property type="taxonomic scope" value="Bacteria"/>
</dbReference>
<dbReference type="HOGENOM" id="CLU_065341_0_1_14"/>
<dbReference type="OrthoDB" id="9808773at2"/>
<dbReference type="Proteomes" id="UP000006647">
    <property type="component" value="Chromosome"/>
</dbReference>
<dbReference type="GO" id="GO:0005829">
    <property type="term" value="C:cytosol"/>
    <property type="evidence" value="ECO:0007669"/>
    <property type="project" value="TreeGrafter"/>
</dbReference>
<dbReference type="GO" id="GO:0070043">
    <property type="term" value="F:rRNA (guanine-N7-)-methyltransferase activity"/>
    <property type="evidence" value="ECO:0007669"/>
    <property type="project" value="UniProtKB-UniRule"/>
</dbReference>
<dbReference type="CDD" id="cd02440">
    <property type="entry name" value="AdoMet_MTases"/>
    <property type="match status" value="1"/>
</dbReference>
<dbReference type="FunFam" id="3.40.50.150:FF:000041">
    <property type="entry name" value="Ribosomal RNA small subunit methyltransferase G"/>
    <property type="match status" value="1"/>
</dbReference>
<dbReference type="Gene3D" id="3.40.50.150">
    <property type="entry name" value="Vaccinia Virus protein VP39"/>
    <property type="match status" value="1"/>
</dbReference>
<dbReference type="HAMAP" id="MF_00074">
    <property type="entry name" value="16SrRNA_methyltr_G"/>
    <property type="match status" value="1"/>
</dbReference>
<dbReference type="InterPro" id="IPR003682">
    <property type="entry name" value="rRNA_ssu_MeTfrase_G"/>
</dbReference>
<dbReference type="InterPro" id="IPR029063">
    <property type="entry name" value="SAM-dependent_MTases_sf"/>
</dbReference>
<dbReference type="NCBIfam" id="TIGR00138">
    <property type="entry name" value="rsmG_gidB"/>
    <property type="match status" value="1"/>
</dbReference>
<dbReference type="PANTHER" id="PTHR31760">
    <property type="entry name" value="S-ADENOSYL-L-METHIONINE-DEPENDENT METHYLTRANSFERASES SUPERFAMILY PROTEIN"/>
    <property type="match status" value="1"/>
</dbReference>
<dbReference type="PANTHER" id="PTHR31760:SF0">
    <property type="entry name" value="S-ADENOSYL-L-METHIONINE-DEPENDENT METHYLTRANSFERASES SUPERFAMILY PROTEIN"/>
    <property type="match status" value="1"/>
</dbReference>
<dbReference type="Pfam" id="PF02527">
    <property type="entry name" value="GidB"/>
    <property type="match status" value="1"/>
</dbReference>
<dbReference type="PIRSF" id="PIRSF003078">
    <property type="entry name" value="GidB"/>
    <property type="match status" value="1"/>
</dbReference>
<dbReference type="SUPFAM" id="SSF53335">
    <property type="entry name" value="S-adenosyl-L-methionine-dependent methyltransferases"/>
    <property type="match status" value="1"/>
</dbReference>
<proteinExistence type="inferred from homology"/>
<gene>
    <name evidence="1" type="primary">rsmG</name>
    <name type="ordered locus">Mfl662</name>
</gene>
<sequence>MWTMFNNWKIFEDNLGFVPSEEIKDKLNEYYKILVEENLKYNLTRITNEEDVYEKHFLDSLLFTKETKIDNQKIIDIGTGPGFPGIVLKIFFPETDITLIDSNNKKINFLNIVIKKLNLKQIEAKHARAEELARIENEKYDIAISRAVAYLDVILELAVRFLKIQGKLILLKGPRADEEIKNSKNIDQKLKIKLTNKQSLADTGFGERINLFYEKEKSTPELYPREYAKIVKESGKK</sequence>
<name>RSMG_MESFL</name>
<protein>
    <recommendedName>
        <fullName evidence="1">Ribosomal RNA small subunit methyltransferase G</fullName>
        <ecNumber evidence="1">2.1.1.-</ecNumber>
    </recommendedName>
    <alternativeName>
        <fullName evidence="1">16S rRNA 7-methylguanosine methyltransferase</fullName>
        <shortName evidence="1">16S rRNA m7G methyltransferase</shortName>
    </alternativeName>
</protein>
<comment type="function">
    <text evidence="1">Specifically methylates the N7 position of a guanine in 16S rRNA.</text>
</comment>
<comment type="subcellular location">
    <subcellularLocation>
        <location evidence="1">Cytoplasm</location>
    </subcellularLocation>
</comment>
<comment type="similarity">
    <text evidence="1">Belongs to the methyltransferase superfamily. RNA methyltransferase RsmG family.</text>
</comment>
<feature type="chain" id="PRO_0000184278" description="Ribosomal RNA small subunit methyltransferase G">
    <location>
        <begin position="1"/>
        <end position="237"/>
    </location>
</feature>
<feature type="binding site" evidence="1">
    <location>
        <position position="78"/>
    </location>
    <ligand>
        <name>S-adenosyl-L-methionine</name>
        <dbReference type="ChEBI" id="CHEBI:59789"/>
    </ligand>
</feature>
<feature type="binding site" evidence="1">
    <location>
        <position position="83"/>
    </location>
    <ligand>
        <name>S-adenosyl-L-methionine</name>
        <dbReference type="ChEBI" id="CHEBI:59789"/>
    </ligand>
</feature>
<feature type="binding site" evidence="1">
    <location>
        <begin position="129"/>
        <end position="130"/>
    </location>
    <ligand>
        <name>S-adenosyl-L-methionine</name>
        <dbReference type="ChEBI" id="CHEBI:59789"/>
    </ligand>
</feature>
<feature type="binding site" evidence="1">
    <location>
        <position position="146"/>
    </location>
    <ligand>
        <name>S-adenosyl-L-methionine</name>
        <dbReference type="ChEBI" id="CHEBI:59789"/>
    </ligand>
</feature>
<reference key="1">
    <citation type="submission" date="2004-06" db="EMBL/GenBank/DDBJ databases">
        <authorList>
            <person name="Birren B.W."/>
            <person name="Stange-Thomann N."/>
            <person name="Hafez N."/>
            <person name="DeCaprio D."/>
            <person name="Fisher S."/>
            <person name="Butler J."/>
            <person name="Elkins T."/>
            <person name="Kodira C.D."/>
            <person name="Major J."/>
            <person name="Wang S."/>
            <person name="Nicol R."/>
            <person name="Nusbaum C."/>
        </authorList>
    </citation>
    <scope>NUCLEOTIDE SEQUENCE [LARGE SCALE GENOMIC DNA]</scope>
    <source>
        <strain>ATCC 33453 / NBRC 100688 / NCTC 11704 / L1</strain>
    </source>
</reference>
<evidence type="ECO:0000255" key="1">
    <source>
        <dbReference type="HAMAP-Rule" id="MF_00074"/>
    </source>
</evidence>
<keyword id="KW-0963">Cytoplasm</keyword>
<keyword id="KW-0489">Methyltransferase</keyword>
<keyword id="KW-1185">Reference proteome</keyword>
<keyword id="KW-0698">rRNA processing</keyword>
<keyword id="KW-0949">S-adenosyl-L-methionine</keyword>
<keyword id="KW-0808">Transferase</keyword>